<dbReference type="EMBL" id="U27100">
    <property type="protein sequence ID" value="AAA75319.1"/>
    <property type="molecule type" value="Genomic_DNA"/>
</dbReference>
<dbReference type="EMBL" id="AF158101">
    <property type="protein sequence ID" value="AAD42535.1"/>
    <property type="molecule type" value="Genomic_DNA"/>
</dbReference>
<dbReference type="RefSeq" id="NP_049809.1">
    <property type="nucleotide sequence ID" value="NC_000866.4"/>
</dbReference>
<dbReference type="GeneID" id="1258689"/>
<dbReference type="KEGG" id="vg:1258689"/>
<dbReference type="Proteomes" id="UP000009087">
    <property type="component" value="Segment"/>
</dbReference>
<proteinExistence type="predicted"/>
<keyword id="KW-1185">Reference proteome</keyword>
<gene>
    <name type="primary">y12B</name>
    <name type="synonym">alt.-2</name>
</gene>
<organismHost>
    <name type="scientific">Escherichia coli</name>
    <dbReference type="NCBI Taxonomy" id="562"/>
</organismHost>
<name>Y12B_BPT4</name>
<organism>
    <name type="scientific">Enterobacteria phage T4</name>
    <name type="common">Bacteriophage T4</name>
    <dbReference type="NCBI Taxonomy" id="10665"/>
    <lineage>
        <taxon>Viruses</taxon>
        <taxon>Duplodnaviria</taxon>
        <taxon>Heunggongvirae</taxon>
        <taxon>Uroviricota</taxon>
        <taxon>Caudoviricetes</taxon>
        <taxon>Straboviridae</taxon>
        <taxon>Tevenvirinae</taxon>
        <taxon>Tequatrovirus</taxon>
    </lineage>
</organism>
<accession>P39494</accession>
<reference key="1">
    <citation type="submission" date="1995-05" db="EMBL/GenBank/DDBJ databases">
        <authorList>
            <person name="Poglazov A."/>
            <person name="Porter D."/>
            <person name="Mesyanzhinov V.V."/>
            <person name="Kutter E.M."/>
        </authorList>
    </citation>
    <scope>NUCLEOTIDE SEQUENCE [GENOMIC DNA]</scope>
</reference>
<reference key="2">
    <citation type="journal article" date="2003" name="Microbiol. Mol. Biol. Rev.">
        <title>Bacteriophage T4 genome.</title>
        <authorList>
            <person name="Miller E.S."/>
            <person name="Kutter E."/>
            <person name="Mosig G."/>
            <person name="Arisaka F."/>
            <person name="Kunisawa T."/>
            <person name="Ruger W."/>
        </authorList>
    </citation>
    <scope>NUCLEOTIDE SEQUENCE [LARGE SCALE GENOMIC DNA]</scope>
</reference>
<protein>
    <recommendedName>
        <fullName>Uncharacterized 7.4 kDa protein in Gp54-alt intergenic region</fullName>
    </recommendedName>
</protein>
<sequence>MMHIVMIGVNEKLSLVKLKNLGGNPIGVINAVFDTALQTMKQYKIDACLLRVLKSSKCSLQVPRVVL</sequence>
<feature type="chain" id="PRO_0000165162" description="Uncharacterized 7.4 kDa protein in Gp54-alt intergenic region">
    <location>
        <begin position="1"/>
        <end position="67"/>
    </location>
</feature>